<comment type="function">
    <text evidence="1">Catalyzes the transfer of the diacylglyceryl group from phosphatidylglycerol to the sulfhydryl group of the N-terminal cysteine of a prolipoprotein, the first step in the formation of mature lipoproteins.</text>
</comment>
<comment type="catalytic activity">
    <reaction evidence="1">
        <text>L-cysteinyl-[prolipoprotein] + a 1,2-diacyl-sn-glycero-3-phospho-(1'-sn-glycerol) = an S-1,2-diacyl-sn-glyceryl-L-cysteinyl-[prolipoprotein] + sn-glycerol 1-phosphate + H(+)</text>
        <dbReference type="Rhea" id="RHEA:56712"/>
        <dbReference type="Rhea" id="RHEA-COMP:14679"/>
        <dbReference type="Rhea" id="RHEA-COMP:14680"/>
        <dbReference type="ChEBI" id="CHEBI:15378"/>
        <dbReference type="ChEBI" id="CHEBI:29950"/>
        <dbReference type="ChEBI" id="CHEBI:57685"/>
        <dbReference type="ChEBI" id="CHEBI:64716"/>
        <dbReference type="ChEBI" id="CHEBI:140658"/>
        <dbReference type="EC" id="2.5.1.145"/>
    </reaction>
</comment>
<comment type="pathway">
    <text evidence="1">Protein modification; lipoprotein biosynthesis (diacylglyceryl transfer).</text>
</comment>
<comment type="subcellular location">
    <subcellularLocation>
        <location evidence="1">Cell inner membrane</location>
        <topology evidence="1">Multi-pass membrane protein</topology>
    </subcellularLocation>
</comment>
<comment type="similarity">
    <text evidence="1">Belongs to the Lgt family.</text>
</comment>
<feature type="chain" id="PRO_1000053381" description="Phosphatidylglycerol--prolipoprotein diacylglyceryl transferase">
    <location>
        <begin position="1"/>
        <end position="270"/>
    </location>
</feature>
<feature type="transmembrane region" description="Helical" evidence="1">
    <location>
        <begin position="17"/>
        <end position="37"/>
    </location>
</feature>
<feature type="transmembrane region" description="Helical" evidence="1">
    <location>
        <begin position="63"/>
        <end position="83"/>
    </location>
</feature>
<feature type="transmembrane region" description="Helical" evidence="1">
    <location>
        <begin position="95"/>
        <end position="115"/>
    </location>
</feature>
<feature type="transmembrane region" description="Helical" evidence="1">
    <location>
        <begin position="182"/>
        <end position="202"/>
    </location>
</feature>
<feature type="transmembrane region" description="Helical" evidence="1">
    <location>
        <begin position="209"/>
        <end position="229"/>
    </location>
</feature>
<feature type="transmembrane region" description="Helical" evidence="1">
    <location>
        <begin position="243"/>
        <end position="263"/>
    </location>
</feature>
<feature type="binding site" evidence="1">
    <location>
        <position position="146"/>
    </location>
    <ligand>
        <name>a 1,2-diacyl-sn-glycero-3-phospho-(1'-sn-glycerol)</name>
        <dbReference type="ChEBI" id="CHEBI:64716"/>
    </ligand>
</feature>
<gene>
    <name evidence="1" type="primary">lgt</name>
    <name type="ordered locus">Aave_1509</name>
</gene>
<dbReference type="EC" id="2.5.1.145" evidence="1"/>
<dbReference type="EMBL" id="CP000512">
    <property type="protein sequence ID" value="ABM32098.1"/>
    <property type="molecule type" value="Genomic_DNA"/>
</dbReference>
<dbReference type="RefSeq" id="WP_011794648.1">
    <property type="nucleotide sequence ID" value="NC_008752.1"/>
</dbReference>
<dbReference type="SMR" id="A1TMB0"/>
<dbReference type="STRING" id="397945.Aave_1509"/>
<dbReference type="GeneID" id="79791183"/>
<dbReference type="KEGG" id="aav:Aave_1509"/>
<dbReference type="eggNOG" id="COG0682">
    <property type="taxonomic scope" value="Bacteria"/>
</dbReference>
<dbReference type="HOGENOM" id="CLU_013386_1_0_4"/>
<dbReference type="OrthoDB" id="871140at2"/>
<dbReference type="UniPathway" id="UPA00664"/>
<dbReference type="Proteomes" id="UP000002596">
    <property type="component" value="Chromosome"/>
</dbReference>
<dbReference type="GO" id="GO:0005886">
    <property type="term" value="C:plasma membrane"/>
    <property type="evidence" value="ECO:0007669"/>
    <property type="project" value="UniProtKB-SubCell"/>
</dbReference>
<dbReference type="GO" id="GO:0008961">
    <property type="term" value="F:phosphatidylglycerol-prolipoprotein diacylglyceryl transferase activity"/>
    <property type="evidence" value="ECO:0007669"/>
    <property type="project" value="UniProtKB-UniRule"/>
</dbReference>
<dbReference type="GO" id="GO:0042158">
    <property type="term" value="P:lipoprotein biosynthetic process"/>
    <property type="evidence" value="ECO:0007669"/>
    <property type="project" value="UniProtKB-UniRule"/>
</dbReference>
<dbReference type="HAMAP" id="MF_01147">
    <property type="entry name" value="Lgt"/>
    <property type="match status" value="1"/>
</dbReference>
<dbReference type="InterPro" id="IPR001640">
    <property type="entry name" value="Lgt"/>
</dbReference>
<dbReference type="NCBIfam" id="TIGR00544">
    <property type="entry name" value="lgt"/>
    <property type="match status" value="1"/>
</dbReference>
<dbReference type="PANTHER" id="PTHR30589:SF0">
    <property type="entry name" value="PHOSPHATIDYLGLYCEROL--PROLIPOPROTEIN DIACYLGLYCERYL TRANSFERASE"/>
    <property type="match status" value="1"/>
</dbReference>
<dbReference type="PANTHER" id="PTHR30589">
    <property type="entry name" value="PROLIPOPROTEIN DIACYLGLYCERYL TRANSFERASE"/>
    <property type="match status" value="1"/>
</dbReference>
<dbReference type="Pfam" id="PF01790">
    <property type="entry name" value="LGT"/>
    <property type="match status" value="1"/>
</dbReference>
<dbReference type="PROSITE" id="PS01311">
    <property type="entry name" value="LGT"/>
    <property type="match status" value="1"/>
</dbReference>
<organism>
    <name type="scientific">Paracidovorax citrulli (strain AAC00-1)</name>
    <name type="common">Acidovorax citrulli</name>
    <dbReference type="NCBI Taxonomy" id="397945"/>
    <lineage>
        <taxon>Bacteria</taxon>
        <taxon>Pseudomonadati</taxon>
        <taxon>Pseudomonadota</taxon>
        <taxon>Betaproteobacteria</taxon>
        <taxon>Burkholderiales</taxon>
        <taxon>Comamonadaceae</taxon>
        <taxon>Paracidovorax</taxon>
    </lineage>
</organism>
<proteinExistence type="inferred from homology"/>
<name>LGT_PARC0</name>
<reference key="1">
    <citation type="submission" date="2006-12" db="EMBL/GenBank/DDBJ databases">
        <title>Complete sequence of Acidovorax avenae subsp. citrulli AAC00-1.</title>
        <authorList>
            <person name="Copeland A."/>
            <person name="Lucas S."/>
            <person name="Lapidus A."/>
            <person name="Barry K."/>
            <person name="Detter J.C."/>
            <person name="Glavina del Rio T."/>
            <person name="Dalin E."/>
            <person name="Tice H."/>
            <person name="Pitluck S."/>
            <person name="Kiss H."/>
            <person name="Brettin T."/>
            <person name="Bruce D."/>
            <person name="Han C."/>
            <person name="Tapia R."/>
            <person name="Gilna P."/>
            <person name="Schmutz J."/>
            <person name="Larimer F."/>
            <person name="Land M."/>
            <person name="Hauser L."/>
            <person name="Kyrpides N."/>
            <person name="Kim E."/>
            <person name="Stahl D."/>
            <person name="Richardson P."/>
        </authorList>
    </citation>
    <scope>NUCLEOTIDE SEQUENCE [LARGE SCALE GENOMIC DNA]</scope>
    <source>
        <strain>AAC00-1</strain>
    </source>
</reference>
<evidence type="ECO:0000255" key="1">
    <source>
        <dbReference type="HAMAP-Rule" id="MF_01147"/>
    </source>
</evidence>
<accession>A1TMB0</accession>
<keyword id="KW-0997">Cell inner membrane</keyword>
<keyword id="KW-1003">Cell membrane</keyword>
<keyword id="KW-0472">Membrane</keyword>
<keyword id="KW-0808">Transferase</keyword>
<keyword id="KW-0812">Transmembrane</keyword>
<keyword id="KW-1133">Transmembrane helix</keyword>
<sequence length="270" mass="30619">MLMYPHIDPIALQIGPLAIHWYGLTYLAAFGLFMFLGTRRLRHEPYASLTGAQAWTRKDVEDILFLGVLGVVVGGRLGYCLFYKPGYYLSHPLEIFYIWQGGMSFHGGLLGVIASMVWFARSRHRPWLQVADFVAPCVPTGLAAGRVGNFINGELWGRFCDPSLPWGMVFPQSGSMLPRHPSQVYQFLMEGLLLFVLLWLYARRERRQGEVAAAFLVGYGCFRFIAEYFREPDAFLGILSLGMSMGQWLCVPMIVAGVLLWVWARRQPAR</sequence>
<protein>
    <recommendedName>
        <fullName evidence="1">Phosphatidylglycerol--prolipoprotein diacylglyceryl transferase</fullName>
        <ecNumber evidence="1">2.5.1.145</ecNumber>
    </recommendedName>
</protein>